<evidence type="ECO:0000255" key="1">
    <source>
        <dbReference type="HAMAP-Rule" id="MF_00657"/>
    </source>
</evidence>
<gene>
    <name type="ordered locus">sync_1544</name>
</gene>
<dbReference type="EC" id="1.14.11.-" evidence="1"/>
<dbReference type="EMBL" id="CP000435">
    <property type="protein sequence ID" value="ABI46633.1"/>
    <property type="molecule type" value="Genomic_DNA"/>
</dbReference>
<dbReference type="RefSeq" id="WP_011619466.1">
    <property type="nucleotide sequence ID" value="NC_008319.1"/>
</dbReference>
<dbReference type="SMR" id="Q0I9X3"/>
<dbReference type="STRING" id="64471.sync_1544"/>
<dbReference type="KEGG" id="syg:sync_1544"/>
<dbReference type="eggNOG" id="COG3128">
    <property type="taxonomic scope" value="Bacteria"/>
</dbReference>
<dbReference type="HOGENOM" id="CLU_106663_0_0_3"/>
<dbReference type="OrthoDB" id="9812472at2"/>
<dbReference type="Proteomes" id="UP000001961">
    <property type="component" value="Chromosome"/>
</dbReference>
<dbReference type="GO" id="GO:0016706">
    <property type="term" value="F:2-oxoglutarate-dependent dioxygenase activity"/>
    <property type="evidence" value="ECO:0007669"/>
    <property type="project" value="UniProtKB-UniRule"/>
</dbReference>
<dbReference type="GO" id="GO:0005506">
    <property type="term" value="F:iron ion binding"/>
    <property type="evidence" value="ECO:0007669"/>
    <property type="project" value="UniProtKB-UniRule"/>
</dbReference>
<dbReference type="GO" id="GO:0031418">
    <property type="term" value="F:L-ascorbic acid binding"/>
    <property type="evidence" value="ECO:0007669"/>
    <property type="project" value="UniProtKB-KW"/>
</dbReference>
<dbReference type="GO" id="GO:0006974">
    <property type="term" value="P:DNA damage response"/>
    <property type="evidence" value="ECO:0007669"/>
    <property type="project" value="TreeGrafter"/>
</dbReference>
<dbReference type="GO" id="GO:0006879">
    <property type="term" value="P:intracellular iron ion homeostasis"/>
    <property type="evidence" value="ECO:0007669"/>
    <property type="project" value="TreeGrafter"/>
</dbReference>
<dbReference type="Gene3D" id="2.60.120.620">
    <property type="entry name" value="q2cbj1_9rhob like domain"/>
    <property type="match status" value="1"/>
</dbReference>
<dbReference type="HAMAP" id="MF_00657">
    <property type="entry name" value="Hydroxyl_YbiX"/>
    <property type="match status" value="1"/>
</dbReference>
<dbReference type="InterPro" id="IPR005123">
    <property type="entry name" value="Oxoglu/Fe-dep_dioxygenase_dom"/>
</dbReference>
<dbReference type="InterPro" id="IPR023550">
    <property type="entry name" value="PKHD_hydroxylase"/>
</dbReference>
<dbReference type="InterPro" id="IPR006620">
    <property type="entry name" value="Pro_4_hyd_alph"/>
</dbReference>
<dbReference type="InterPro" id="IPR044862">
    <property type="entry name" value="Pro_4_hyd_alph_FE2OG_OXY"/>
</dbReference>
<dbReference type="NCBIfam" id="NF003974">
    <property type="entry name" value="PRK05467.1-3"/>
    <property type="match status" value="1"/>
</dbReference>
<dbReference type="PANTHER" id="PTHR41536">
    <property type="entry name" value="PKHD-TYPE HYDROXYLASE YBIX"/>
    <property type="match status" value="1"/>
</dbReference>
<dbReference type="PANTHER" id="PTHR41536:SF1">
    <property type="entry name" value="PKHD-TYPE HYDROXYLASE YBIX"/>
    <property type="match status" value="1"/>
</dbReference>
<dbReference type="Pfam" id="PF13640">
    <property type="entry name" value="2OG-FeII_Oxy_3"/>
    <property type="match status" value="1"/>
</dbReference>
<dbReference type="SMART" id="SM00702">
    <property type="entry name" value="P4Hc"/>
    <property type="match status" value="1"/>
</dbReference>
<dbReference type="PROSITE" id="PS51471">
    <property type="entry name" value="FE2OG_OXY"/>
    <property type="match status" value="1"/>
</dbReference>
<proteinExistence type="inferred from homology"/>
<protein>
    <recommendedName>
        <fullName evidence="1">PKHD-type hydroxylase sync_1544</fullName>
        <ecNumber evidence="1">1.14.11.-</ecNumber>
    </recommendedName>
</protein>
<organism>
    <name type="scientific">Synechococcus sp. (strain CC9311)</name>
    <dbReference type="NCBI Taxonomy" id="64471"/>
    <lineage>
        <taxon>Bacteria</taxon>
        <taxon>Bacillati</taxon>
        <taxon>Cyanobacteriota</taxon>
        <taxon>Cyanophyceae</taxon>
        <taxon>Synechococcales</taxon>
        <taxon>Synechococcaceae</taxon>
        <taxon>Synechococcus</taxon>
    </lineage>
</organism>
<comment type="cofactor">
    <cofactor evidence="1">
        <name>Fe(2+)</name>
        <dbReference type="ChEBI" id="CHEBI:29033"/>
    </cofactor>
    <text evidence="1">Binds 1 Fe(2+) ion per subunit.</text>
</comment>
<comment type="cofactor">
    <cofactor evidence="1">
        <name>L-ascorbate</name>
        <dbReference type="ChEBI" id="CHEBI:38290"/>
    </cofactor>
</comment>
<sequence>MNHLRLQILDQATCERLLERLANEAEWLDGSLTAGAHAKGGKRNFQINYDSALRKEIHELVERAMWNHPVVKGFCLPRKLHRFLISKTEKEGGYDTHVDNAYMSSGRSDLSFTLSLTDDTMYEGGDLEIDSISESYPIKLKQGEILIYPSTSLHRVCNVTSGIRTVCVGWIESYVQAENDRICLFQLESGARAVLAKHGRSDELDLIFLAYTNLLRRLGG</sequence>
<accession>Q0I9X3</accession>
<name>Y1544_SYNS3</name>
<reference key="1">
    <citation type="journal article" date="2006" name="Proc. Natl. Acad. Sci. U.S.A.">
        <title>Genome sequence of Synechococcus CC9311: insights into adaptation to a coastal environment.</title>
        <authorList>
            <person name="Palenik B."/>
            <person name="Ren Q."/>
            <person name="Dupont C.L."/>
            <person name="Myers G.S."/>
            <person name="Heidelberg J.F."/>
            <person name="Badger J.H."/>
            <person name="Madupu R."/>
            <person name="Nelson W.C."/>
            <person name="Brinkac L.M."/>
            <person name="Dodson R.J."/>
            <person name="Durkin A.S."/>
            <person name="Daugherty S.C."/>
            <person name="Sullivan S.A."/>
            <person name="Khouri H."/>
            <person name="Mohamoud Y."/>
            <person name="Halpin R."/>
            <person name="Paulsen I.T."/>
        </authorList>
    </citation>
    <scope>NUCLEOTIDE SEQUENCE [LARGE SCALE GENOMIC DNA]</scope>
    <source>
        <strain>CC9311</strain>
    </source>
</reference>
<keyword id="KW-0223">Dioxygenase</keyword>
<keyword id="KW-0408">Iron</keyword>
<keyword id="KW-0479">Metal-binding</keyword>
<keyword id="KW-0560">Oxidoreductase</keyword>
<keyword id="KW-1185">Reference proteome</keyword>
<keyword id="KW-0847">Vitamin C</keyword>
<feature type="chain" id="PRO_0000346528" description="PKHD-type hydroxylase sync_1544">
    <location>
        <begin position="1"/>
        <end position="220"/>
    </location>
</feature>
<feature type="domain" description="Fe2OG dioxygenase" evidence="1">
    <location>
        <begin position="79"/>
        <end position="173"/>
    </location>
</feature>
<feature type="binding site" evidence="1">
    <location>
        <position position="97"/>
    </location>
    <ligand>
        <name>Fe cation</name>
        <dbReference type="ChEBI" id="CHEBI:24875"/>
    </ligand>
</feature>
<feature type="binding site" evidence="1">
    <location>
        <position position="99"/>
    </location>
    <ligand>
        <name>Fe cation</name>
        <dbReference type="ChEBI" id="CHEBI:24875"/>
    </ligand>
</feature>
<feature type="binding site" evidence="1">
    <location>
        <position position="154"/>
    </location>
    <ligand>
        <name>Fe cation</name>
        <dbReference type="ChEBI" id="CHEBI:24875"/>
    </ligand>
</feature>
<feature type="binding site" evidence="1">
    <location>
        <position position="164"/>
    </location>
    <ligand>
        <name>2-oxoglutarate</name>
        <dbReference type="ChEBI" id="CHEBI:16810"/>
    </ligand>
</feature>